<accession>Q31XD2</accession>
<protein>
    <recommendedName>
        <fullName evidence="1">Protein GrpE</fullName>
    </recommendedName>
    <alternativeName>
        <fullName evidence="1">HSP-70 cofactor</fullName>
    </alternativeName>
</protein>
<keyword id="KW-0143">Chaperone</keyword>
<keyword id="KW-0963">Cytoplasm</keyword>
<keyword id="KW-0346">Stress response</keyword>
<name>GRPE_SHIBS</name>
<sequence length="197" mass="21812">MSSKEQKTPEGQAPEEIIMDQHEEIEAVEPEASAEQVDPRDEKIANLEAQLAEAQTRERDGILRVKAEMENLRRRTELDIEKAHKFALEKFINELLPVIDSLDRALEVADKANPDMSAMVEGIELTLKSMLDVVRKFGVEVIAETNVPLDPNVHQAIAMVESDDVAPGNVLGIMQKGYTLNGRTIRAAMVTVAKAKA</sequence>
<reference key="1">
    <citation type="journal article" date="2005" name="Nucleic Acids Res.">
        <title>Genome dynamics and diversity of Shigella species, the etiologic agents of bacillary dysentery.</title>
        <authorList>
            <person name="Yang F."/>
            <person name="Yang J."/>
            <person name="Zhang X."/>
            <person name="Chen L."/>
            <person name="Jiang Y."/>
            <person name="Yan Y."/>
            <person name="Tang X."/>
            <person name="Wang J."/>
            <person name="Xiong Z."/>
            <person name="Dong J."/>
            <person name="Xue Y."/>
            <person name="Zhu Y."/>
            <person name="Xu X."/>
            <person name="Sun L."/>
            <person name="Chen S."/>
            <person name="Nie H."/>
            <person name="Peng J."/>
            <person name="Xu J."/>
            <person name="Wang Y."/>
            <person name="Yuan Z."/>
            <person name="Wen Y."/>
            <person name="Yao Z."/>
            <person name="Shen Y."/>
            <person name="Qiang B."/>
            <person name="Hou Y."/>
            <person name="Yu J."/>
            <person name="Jin Q."/>
        </authorList>
    </citation>
    <scope>NUCLEOTIDE SEQUENCE [LARGE SCALE GENOMIC DNA]</scope>
    <source>
        <strain>Sb227</strain>
    </source>
</reference>
<gene>
    <name evidence="1" type="primary">grpE</name>
    <name type="ordered locus">SBO_2749</name>
</gene>
<dbReference type="EMBL" id="CP000036">
    <property type="protein sequence ID" value="ABB67276.1"/>
    <property type="molecule type" value="Genomic_DNA"/>
</dbReference>
<dbReference type="RefSeq" id="WP_001296310.1">
    <property type="nucleotide sequence ID" value="NC_007613.1"/>
</dbReference>
<dbReference type="SMR" id="Q31XD2"/>
<dbReference type="GeneID" id="93774463"/>
<dbReference type="KEGG" id="sbo:SBO_2749"/>
<dbReference type="HOGENOM" id="CLU_057217_6_0_6"/>
<dbReference type="Proteomes" id="UP000007067">
    <property type="component" value="Chromosome"/>
</dbReference>
<dbReference type="GO" id="GO:0005829">
    <property type="term" value="C:cytosol"/>
    <property type="evidence" value="ECO:0007669"/>
    <property type="project" value="TreeGrafter"/>
</dbReference>
<dbReference type="GO" id="GO:0000774">
    <property type="term" value="F:adenyl-nucleotide exchange factor activity"/>
    <property type="evidence" value="ECO:0007669"/>
    <property type="project" value="InterPro"/>
</dbReference>
<dbReference type="GO" id="GO:0042803">
    <property type="term" value="F:protein homodimerization activity"/>
    <property type="evidence" value="ECO:0007669"/>
    <property type="project" value="InterPro"/>
</dbReference>
<dbReference type="GO" id="GO:0051087">
    <property type="term" value="F:protein-folding chaperone binding"/>
    <property type="evidence" value="ECO:0007669"/>
    <property type="project" value="InterPro"/>
</dbReference>
<dbReference type="GO" id="GO:0051082">
    <property type="term" value="F:unfolded protein binding"/>
    <property type="evidence" value="ECO:0007669"/>
    <property type="project" value="TreeGrafter"/>
</dbReference>
<dbReference type="GO" id="GO:0006457">
    <property type="term" value="P:protein folding"/>
    <property type="evidence" value="ECO:0007669"/>
    <property type="project" value="InterPro"/>
</dbReference>
<dbReference type="CDD" id="cd00446">
    <property type="entry name" value="GrpE"/>
    <property type="match status" value="1"/>
</dbReference>
<dbReference type="FunFam" id="2.30.22.10:FF:000001">
    <property type="entry name" value="Protein GrpE"/>
    <property type="match status" value="1"/>
</dbReference>
<dbReference type="FunFam" id="3.90.20.20:FF:000001">
    <property type="entry name" value="Protein GrpE"/>
    <property type="match status" value="1"/>
</dbReference>
<dbReference type="Gene3D" id="3.90.20.20">
    <property type="match status" value="1"/>
</dbReference>
<dbReference type="Gene3D" id="2.30.22.10">
    <property type="entry name" value="Head domain of nucleotide exchange factor GrpE"/>
    <property type="match status" value="1"/>
</dbReference>
<dbReference type="HAMAP" id="MF_01151">
    <property type="entry name" value="GrpE"/>
    <property type="match status" value="1"/>
</dbReference>
<dbReference type="InterPro" id="IPR000740">
    <property type="entry name" value="GrpE"/>
</dbReference>
<dbReference type="InterPro" id="IPR013805">
    <property type="entry name" value="GrpE_coiled_coil"/>
</dbReference>
<dbReference type="InterPro" id="IPR009012">
    <property type="entry name" value="GrpE_head"/>
</dbReference>
<dbReference type="NCBIfam" id="NF007655">
    <property type="entry name" value="PRK10325.1"/>
    <property type="match status" value="1"/>
</dbReference>
<dbReference type="NCBIfam" id="NF010738">
    <property type="entry name" value="PRK14140.1"/>
    <property type="match status" value="1"/>
</dbReference>
<dbReference type="NCBIfam" id="NF010748">
    <property type="entry name" value="PRK14150.1"/>
    <property type="match status" value="1"/>
</dbReference>
<dbReference type="PANTHER" id="PTHR21237">
    <property type="entry name" value="GRPE PROTEIN"/>
    <property type="match status" value="1"/>
</dbReference>
<dbReference type="PANTHER" id="PTHR21237:SF23">
    <property type="entry name" value="GRPE PROTEIN HOMOLOG, MITOCHONDRIAL"/>
    <property type="match status" value="1"/>
</dbReference>
<dbReference type="Pfam" id="PF01025">
    <property type="entry name" value="GrpE"/>
    <property type="match status" value="1"/>
</dbReference>
<dbReference type="PRINTS" id="PR00773">
    <property type="entry name" value="GRPEPROTEIN"/>
</dbReference>
<dbReference type="SUPFAM" id="SSF58014">
    <property type="entry name" value="Coiled-coil domain of nucleotide exchange factor GrpE"/>
    <property type="match status" value="1"/>
</dbReference>
<dbReference type="SUPFAM" id="SSF51064">
    <property type="entry name" value="Head domain of nucleotide exchange factor GrpE"/>
    <property type="match status" value="1"/>
</dbReference>
<dbReference type="PROSITE" id="PS01071">
    <property type="entry name" value="GRPE"/>
    <property type="match status" value="1"/>
</dbReference>
<evidence type="ECO:0000255" key="1">
    <source>
        <dbReference type="HAMAP-Rule" id="MF_01151"/>
    </source>
</evidence>
<evidence type="ECO:0000256" key="2">
    <source>
        <dbReference type="SAM" id="MobiDB-lite"/>
    </source>
</evidence>
<feature type="chain" id="PRO_1000053639" description="Protein GrpE">
    <location>
        <begin position="1"/>
        <end position="197"/>
    </location>
</feature>
<feature type="region of interest" description="Disordered" evidence="2">
    <location>
        <begin position="1"/>
        <end position="39"/>
    </location>
</feature>
<organism>
    <name type="scientific">Shigella boydii serotype 4 (strain Sb227)</name>
    <dbReference type="NCBI Taxonomy" id="300268"/>
    <lineage>
        <taxon>Bacteria</taxon>
        <taxon>Pseudomonadati</taxon>
        <taxon>Pseudomonadota</taxon>
        <taxon>Gammaproteobacteria</taxon>
        <taxon>Enterobacterales</taxon>
        <taxon>Enterobacteriaceae</taxon>
        <taxon>Shigella</taxon>
    </lineage>
</organism>
<comment type="function">
    <text evidence="1">Participates actively in the response to hyperosmotic and heat shock by preventing the aggregation of stress-denatured proteins, in association with DnaK and GrpE. It is the nucleotide exchange factor for DnaK and may function as a thermosensor. Unfolded proteins bind initially to DnaJ; upon interaction with the DnaJ-bound protein, DnaK hydrolyzes its bound ATP, resulting in the formation of a stable complex. GrpE releases ADP from DnaK; ATP binding to DnaK triggers the release of the substrate protein, thus completing the reaction cycle. Several rounds of ATP-dependent interactions between DnaJ, DnaK and GrpE are required for fully efficient folding.</text>
</comment>
<comment type="subunit">
    <text evidence="1">Homodimer.</text>
</comment>
<comment type="subcellular location">
    <subcellularLocation>
        <location evidence="1">Cytoplasm</location>
    </subcellularLocation>
</comment>
<comment type="similarity">
    <text evidence="1">Belongs to the GrpE family.</text>
</comment>
<proteinExistence type="inferred from homology"/>